<dbReference type="EMBL" id="M88097">
    <property type="protein sequence ID" value="AAA29743.3"/>
    <property type="molecule type" value="Genomic_DNA"/>
</dbReference>
<dbReference type="SMR" id="Q00798"/>
<dbReference type="GO" id="GO:0016020">
    <property type="term" value="C:membrane"/>
    <property type="evidence" value="ECO:0000314"/>
    <property type="project" value="UniProtKB"/>
</dbReference>
<dbReference type="GO" id="GO:0098609">
    <property type="term" value="P:cell-cell adhesion"/>
    <property type="evidence" value="ECO:0000314"/>
    <property type="project" value="UniProtKB"/>
</dbReference>
<protein>
    <recommendedName>
        <fullName>Reticulocyte-binding protein 1</fullName>
    </recommendedName>
</protein>
<gene>
    <name type="primary">RBP1</name>
</gene>
<organism>
    <name type="scientific">Plasmodium vivax (strain Belem)</name>
    <dbReference type="NCBI Taxonomy" id="31273"/>
    <lineage>
        <taxon>Eukaryota</taxon>
        <taxon>Sar</taxon>
        <taxon>Alveolata</taxon>
        <taxon>Apicomplexa</taxon>
        <taxon>Aconoidasida</taxon>
        <taxon>Haemosporida</taxon>
        <taxon>Plasmodiidae</taxon>
        <taxon>Plasmodium</taxon>
        <taxon>Plasmodium (Plasmodium)</taxon>
    </lineage>
</organism>
<feature type="signal peptide" evidence="1">
    <location>
        <begin position="1"/>
        <end position="22"/>
    </location>
</feature>
<feature type="chain" id="PRO_0000024576" description="Reticulocyte-binding protein 1">
    <location>
        <begin position="23"/>
        <end position="2833"/>
    </location>
</feature>
<feature type="region of interest" description="Disordered" evidence="2">
    <location>
        <begin position="75"/>
        <end position="95"/>
    </location>
</feature>
<feature type="region of interest" description="Disordered" evidence="2">
    <location>
        <begin position="112"/>
        <end position="133"/>
    </location>
</feature>
<feature type="region of interest" description="Disordered" evidence="2">
    <location>
        <begin position="819"/>
        <end position="860"/>
    </location>
</feature>
<feature type="region of interest" description="Disordered" evidence="2">
    <location>
        <begin position="2619"/>
        <end position="2755"/>
    </location>
</feature>
<feature type="short sequence motif" description="Cell attachment site" evidence="1">
    <location>
        <begin position="2563"/>
        <end position="2565"/>
    </location>
</feature>
<feature type="compositionally biased region" description="Basic and acidic residues" evidence="2">
    <location>
        <begin position="75"/>
        <end position="91"/>
    </location>
</feature>
<feature type="compositionally biased region" description="Basic and acidic residues" evidence="2">
    <location>
        <begin position="819"/>
        <end position="836"/>
    </location>
</feature>
<feature type="compositionally biased region" description="Acidic residues" evidence="2">
    <location>
        <begin position="837"/>
        <end position="849"/>
    </location>
</feature>
<feature type="compositionally biased region" description="Basic and acidic residues" evidence="2">
    <location>
        <begin position="2621"/>
        <end position="2633"/>
    </location>
</feature>
<feature type="compositionally biased region" description="Basic and acidic residues" evidence="2">
    <location>
        <begin position="2640"/>
        <end position="2652"/>
    </location>
</feature>
<feature type="compositionally biased region" description="Polar residues" evidence="2">
    <location>
        <begin position="2655"/>
        <end position="2670"/>
    </location>
</feature>
<feature type="compositionally biased region" description="Acidic residues" evidence="2">
    <location>
        <begin position="2706"/>
        <end position="2720"/>
    </location>
</feature>
<feature type="compositionally biased region" description="Basic and acidic residues" evidence="2">
    <location>
        <begin position="2731"/>
        <end position="2742"/>
    </location>
</feature>
<feature type="compositionally biased region" description="Polar residues" evidence="2">
    <location>
        <begin position="2743"/>
        <end position="2755"/>
    </location>
</feature>
<accession>Q00798</accession>
<sequence>MKRGICLAALLCLFNYLGAGHGENAEEDIRNSEGKVNFFSLDSNLKKNKKSKHNRVKRRNAKISNFLSQKAYVKETDNASGKDAEGSRPSHDSSFVNLNGHVDGKSLSYSVHVKESTPHSTTRESTEKGKENEKIQGVLSSFVQSQEGGESDDLEGMYNSIVDMSEKLKENDKYNLVFDMEIDFVDLQFFNLILELIPKDSQYHTYYEETLKQQVTEYTNSLKTLMDSCISEKDQMIILEYEINYAKRKSIETETLGDKETKLSAVSQAYAKHLESYKGVLKPKLNDIKNNAFSVLKDSYCKDNCGEYVQKYNTMRKNFISSSDQYKMEAYVYIPKSINDYTVLDKILSESNELGIDIQETVNSLKLLGEEISEVSHLYVINSTLIDDAAKKLESINEEDESAEIDLQKFEDNSKALANNYCIFQYIKTLNEPIKKAYESKVIKSNELLSTIIDTLGKSATALQESTFDQEECNKIKTEAEKVKDDAEDICEKNEQIYYEIPESEDETIDDKINDLQDLIDQMKEYKDEIVNNSEFISNRYKNIYENLKETYETELNDIGKLENDTSKVNFYLMQIRKINTEKTKIDESLQTVEKFYKEILDSKEKIYELKIEFEKSVTEINRLQDGESARDLHEEQIKEILDKMAKKVHYLKELLSLKGKSSVYFTEMNELLNTASYDNMEGFSAKKEKADNDINALYNSVYREDINALIEEVEKFVTENKESTLEMLKDEEMEEKLQDAKETFAKLNFVSDDKLTDVYTKMSAEVTNAEGIKKEIAQKQFENVHKKMKEFSDAFSTKFEALQNSMQQYNQEGDAIEKHKQNRSEKEEEYFKNESVEEDLSREETEEQEYTKHKNNFSRRKGEISAEITNMREVINKIESQLNYYGVIEKYFSLIGDQNEVSTAKALKEKIVSDSLRDKIDQYETEFKEKTSAVENTVSTIQSLSKAIDSLKRLNGSINNCKKYNTDIDLLRSKIKTLREEVQKEIAETEGDKVVGENTTALLLKSLRDKMGKINEKLNDGRLNSLDTKKEDLLKFYSESKSKIHLSKDQKGPQDPLNRIDEWEDIKREVDELNVNYQVISENKVTLFKNNSVTYIEAMHSHINTVAHGITSNKNEILKSVKEVEDKLNLVEQNEDYKKVKNPENEKQLEAIRGSMSKLKEVINKHVSEMTQLESTANTLKSNAKGKENEHDLEELNKTKGQMRDIYEKLKKIAEELKEGTVNELKDANEKANKVELEFERNIIGHVLERITVEKDKAGKVVEEMNSLKTKIEKLIQETSDDSQNELVTTSITKHLENAKGYEDVIKRNEEDSIQLREKAKSLETLDEMKKLVQQVNMNLQSAIQGNAGISKELNELKGVIELLISTNYSSILEYVKKNSSESVRFSQLANGEFTKAEGEEKNASARLAEAEKLKEQIVKDLDYSDIDDKVKKIEGIKREILKMKESALTFWEESEKFKQMCSSHMENAKEGKKKIEYLKNNGDGGKANITDSQMEEVGNYVSKAEHAFHTVEAQVDKTKAFYESIVAYVTKMDNLFNESLMKEVKVKCEKKNDEAEQIFGQIKTVDGRIKARVSENERKISELKEKAKVEKKESSQLNDVSTKSLLQIDNCRQQLDSVLSNIGRVKQNALQYFDSADKSMKSVLPISELGAEKSLDKVKAAKESYEKNLETVQNEMSRINVEEGSLTDIDKKITDIENDLLKMKKQYEEGLLQKIKENADKRKSNFELVGSEINALLDPSTSIFIKLKLKEYDMTGDLKNYAVKMNEIHGEFTKSYNLIETHLSNATDYSVTFEKAQSLRELAEKEEEHLRRREEEAIKLLNDIKKVESLKLLKEMMKKVSAEYEGMKRDHTSVSQLVQDMKTIVDELKTLNDISECSSVLNNVVSIVKKVKESKHADYKRDANSMYESMVTLANYFLSDEAKISSGMEFNAEMKSNFKTDLELEIFSVISNSNELLKKIEQDSNDVIQKERESEQLAKDATDIYNVIKLKNEFNEKLEEAKNKEEVVSEKVREALKRLSQVEGIRCHFENFHRLLDNTEELENLKKMVTIYRDKKSEAPKESGLQEMENEMNTYSNSITQLEGIVVSAGESKEDIEKLERSNEEMRNISEKISTIDSKVIEMNSTIDELYKLGKNCQAHWISLISYTANMKTSKKLIMINKEKENTEKCVDYIKDNSSSTDGYVETLKGFYGSKLTFSSASEIVQNADTYSVNFAKHEKESLNAIRDIKKELYLFHQNSDISIVEGGVQNMLALYDKLNEEKREMDELYRNISETKLKQMEHSTDVFKPMIELHKGMNETNNKSLLEKEKKLKSVNDHMHSMEAEMIKNGLKYTPESVQNINNIYSVIEAEVKTLEEIDRDYGDNYQIVEEHKKQFSILIDRTNALMDDIEIFKKENNYNLMEVNTETIHRVNDYIEKITNKLVQAKTEYEQILENIKQNDDMLQNIFLKKVSIIEYFENVKKKKESILNDLYEQERLLKIGEHLDEIKRNVTETLSSYEIDQKMEMMSKNLLEKKSKMMNYTSIYELEREANEINRDAKQIKDDDTILNSVLEAAIQKRGDMDAIFSQMSADRNPNEYKSAEKYMNEANEIIRQLEVKLREIGQLVQDSESILSEMNSKKSAIEKEKTARALRTSENNRREEEERARVQEMSMNNDPTQSETTHSEGSIGEGKESDSDETGLTHDAGADEDSTSSAKGAHELEEEETTAPMEETEMNDNTLLGYDTTRSDEPDMHTENTQDGTYQDTSNSSDEADILNGKFNFNNVKYAGAFVLLCTSAVIGAIIAHKKDDQEELNNGVEDDKVFEVKKSMHPENKEEIIDDSFVDIEY</sequence>
<name>RBP1_PLAVB</name>
<proteinExistence type="inferred from homology"/>
<comment type="function">
    <text>Involved in reticulocyte adhesion. Specifically binds to human reticulocyte cells.</text>
</comment>
<comment type="subunit">
    <text evidence="3">Homodimer.</text>
</comment>
<comment type="subcellular location">
    <subcellularLocation>
        <location>Membrane</location>
        <topology>Peripheral membrane protein</topology>
    </subcellularLocation>
</comment>
<keyword id="KW-0461">Malaria</keyword>
<keyword id="KW-0472">Membrane</keyword>
<keyword id="KW-0675">Receptor</keyword>
<keyword id="KW-0732">Signal</keyword>
<reference key="1">
    <citation type="journal article" date="1992" name="Cell">
        <title>A reticulocyte-binding protein complex of Plasmodium vivax merozoites.</title>
        <authorList>
            <person name="Galinski M.R."/>
            <person name="Medina C.C."/>
            <person name="Ingravallo P."/>
            <person name="Barnwell J.W."/>
        </authorList>
    </citation>
    <scope>NUCLEOTIDE SEQUENCE [GENOMIC DNA]</scope>
</reference>
<reference key="2">
    <citation type="submission" date="2003-12" db="EMBL/GenBank/DDBJ databases">
        <authorList>
            <person name="Tran T.M."/>
            <person name="Galinski M.R."/>
        </authorList>
    </citation>
    <scope>SEQUENCE REVISION TO 987-996; 1070; 1238-1240; 1524; 1559-1567; 1764; 1821; 1902 AND 2061-2063</scope>
</reference>
<evidence type="ECO:0000255" key="1"/>
<evidence type="ECO:0000256" key="2">
    <source>
        <dbReference type="SAM" id="MobiDB-lite"/>
    </source>
</evidence>
<evidence type="ECO:0000305" key="3"/>